<protein>
    <recommendedName>
        <fullName evidence="1">Cyclic pyranopterin monophosphate synthase</fullName>
        <ecNumber evidence="1">4.6.1.17</ecNumber>
    </recommendedName>
    <alternativeName>
        <fullName evidence="1">Molybdenum cofactor biosynthesis protein C</fullName>
    </alternativeName>
</protein>
<reference key="1">
    <citation type="submission" date="2007-02" db="EMBL/GenBank/DDBJ databases">
        <title>Complete sequence of chromosome 1 of Rhodobacter sphaeroides ATCC 17029.</title>
        <authorList>
            <person name="Copeland A."/>
            <person name="Lucas S."/>
            <person name="Lapidus A."/>
            <person name="Barry K."/>
            <person name="Detter J.C."/>
            <person name="Glavina del Rio T."/>
            <person name="Hammon N."/>
            <person name="Israni S."/>
            <person name="Dalin E."/>
            <person name="Tice H."/>
            <person name="Pitluck S."/>
            <person name="Kiss H."/>
            <person name="Brettin T."/>
            <person name="Bruce D."/>
            <person name="Han C."/>
            <person name="Tapia R."/>
            <person name="Gilna P."/>
            <person name="Schmutz J."/>
            <person name="Larimer F."/>
            <person name="Land M."/>
            <person name="Hauser L."/>
            <person name="Kyrpides N."/>
            <person name="Mikhailova N."/>
            <person name="Richardson P."/>
            <person name="Mackenzie C."/>
            <person name="Choudhary M."/>
            <person name="Donohue T.J."/>
            <person name="Kaplan S."/>
        </authorList>
    </citation>
    <scope>NUCLEOTIDE SEQUENCE [LARGE SCALE GENOMIC DNA]</scope>
    <source>
        <strain>ATCC 17029 / ATH 2.4.9</strain>
    </source>
</reference>
<comment type="function">
    <text evidence="1">Catalyzes the conversion of (8S)-3',8-cyclo-7,8-dihydroguanosine 5'-triphosphate to cyclic pyranopterin monophosphate (cPMP).</text>
</comment>
<comment type="catalytic activity">
    <reaction evidence="1">
        <text>(8S)-3',8-cyclo-7,8-dihydroguanosine 5'-triphosphate = cyclic pyranopterin phosphate + diphosphate</text>
        <dbReference type="Rhea" id="RHEA:49580"/>
        <dbReference type="ChEBI" id="CHEBI:33019"/>
        <dbReference type="ChEBI" id="CHEBI:59648"/>
        <dbReference type="ChEBI" id="CHEBI:131766"/>
        <dbReference type="EC" id="4.6.1.17"/>
    </reaction>
</comment>
<comment type="pathway">
    <text evidence="1">Cofactor biosynthesis; molybdopterin biosynthesis.</text>
</comment>
<comment type="subunit">
    <text evidence="1">Homohexamer; trimer of dimers.</text>
</comment>
<comment type="similarity">
    <text evidence="1">Belongs to the MoaC family.</text>
</comment>
<name>MOAC_CERS1</name>
<sequence length="159" mass="16384">MSGLTHFDESGSAHMVDVSEKPVTARVAVARGAVKMSAETLALVTEGRAEKGDVLGVARLAGIMGAKRTADLIPLCHPLPITKVALELTADPALPGVVVEATVKTGGQTGVEMEALTAVSVACLTIYDMVKAVEKGMEITGIRLLLKEGGKSGRFEASA</sequence>
<accession>A3PHK6</accession>
<evidence type="ECO:0000255" key="1">
    <source>
        <dbReference type="HAMAP-Rule" id="MF_01224"/>
    </source>
</evidence>
<feature type="chain" id="PRO_1000054130" description="Cyclic pyranopterin monophosphate synthase">
    <location>
        <begin position="1"/>
        <end position="159"/>
    </location>
</feature>
<feature type="active site" evidence="1">
    <location>
        <position position="128"/>
    </location>
</feature>
<feature type="binding site" evidence="1">
    <location>
        <begin position="75"/>
        <end position="77"/>
    </location>
    <ligand>
        <name>substrate</name>
    </ligand>
</feature>
<feature type="binding site" evidence="1">
    <location>
        <begin position="113"/>
        <end position="114"/>
    </location>
    <ligand>
        <name>substrate</name>
    </ligand>
</feature>
<dbReference type="EC" id="4.6.1.17" evidence="1"/>
<dbReference type="EMBL" id="CP000577">
    <property type="protein sequence ID" value="ABN75822.1"/>
    <property type="molecule type" value="Genomic_DNA"/>
</dbReference>
<dbReference type="RefSeq" id="WP_011840555.1">
    <property type="nucleotide sequence ID" value="NC_009049.1"/>
</dbReference>
<dbReference type="SMR" id="A3PHK6"/>
<dbReference type="KEGG" id="rsh:Rsph17029_0709"/>
<dbReference type="HOGENOM" id="CLU_074693_1_1_5"/>
<dbReference type="UniPathway" id="UPA00344"/>
<dbReference type="GO" id="GO:0061799">
    <property type="term" value="F:cyclic pyranopterin monophosphate synthase activity"/>
    <property type="evidence" value="ECO:0007669"/>
    <property type="project" value="UniProtKB-UniRule"/>
</dbReference>
<dbReference type="GO" id="GO:0006777">
    <property type="term" value="P:Mo-molybdopterin cofactor biosynthetic process"/>
    <property type="evidence" value="ECO:0007669"/>
    <property type="project" value="UniProtKB-UniRule"/>
</dbReference>
<dbReference type="CDD" id="cd01420">
    <property type="entry name" value="MoaC_PE"/>
    <property type="match status" value="1"/>
</dbReference>
<dbReference type="Gene3D" id="3.30.70.640">
    <property type="entry name" value="Molybdopterin cofactor biosynthesis C (MoaC) domain"/>
    <property type="match status" value="1"/>
</dbReference>
<dbReference type="HAMAP" id="MF_01224_B">
    <property type="entry name" value="MoaC_B"/>
    <property type="match status" value="1"/>
</dbReference>
<dbReference type="InterPro" id="IPR023045">
    <property type="entry name" value="MoaC"/>
</dbReference>
<dbReference type="InterPro" id="IPR047594">
    <property type="entry name" value="MoaC_bact/euk"/>
</dbReference>
<dbReference type="InterPro" id="IPR036522">
    <property type="entry name" value="MoaC_sf"/>
</dbReference>
<dbReference type="InterPro" id="IPR050105">
    <property type="entry name" value="MoCo_biosynth_MoaA/MoaC"/>
</dbReference>
<dbReference type="InterPro" id="IPR002820">
    <property type="entry name" value="Mopterin_CF_biosynth-C_dom"/>
</dbReference>
<dbReference type="NCBIfam" id="TIGR00581">
    <property type="entry name" value="moaC"/>
    <property type="match status" value="1"/>
</dbReference>
<dbReference type="NCBIfam" id="NF006870">
    <property type="entry name" value="PRK09364.1"/>
    <property type="match status" value="1"/>
</dbReference>
<dbReference type="PANTHER" id="PTHR22960">
    <property type="entry name" value="MOLYBDOPTERIN COFACTOR SYNTHESIS PROTEIN A"/>
    <property type="match status" value="1"/>
</dbReference>
<dbReference type="Pfam" id="PF01967">
    <property type="entry name" value="MoaC"/>
    <property type="match status" value="1"/>
</dbReference>
<dbReference type="SUPFAM" id="SSF55040">
    <property type="entry name" value="Molybdenum cofactor biosynthesis protein C, MoaC"/>
    <property type="match status" value="1"/>
</dbReference>
<organism>
    <name type="scientific">Cereibacter sphaeroides (strain ATCC 17029 / ATH 2.4.9)</name>
    <name type="common">Rhodobacter sphaeroides</name>
    <dbReference type="NCBI Taxonomy" id="349101"/>
    <lineage>
        <taxon>Bacteria</taxon>
        <taxon>Pseudomonadati</taxon>
        <taxon>Pseudomonadota</taxon>
        <taxon>Alphaproteobacteria</taxon>
        <taxon>Rhodobacterales</taxon>
        <taxon>Paracoccaceae</taxon>
        <taxon>Cereibacter</taxon>
    </lineage>
</organism>
<gene>
    <name evidence="1" type="primary">moaC</name>
    <name type="ordered locus">Rsph17029_0709</name>
</gene>
<proteinExistence type="inferred from homology"/>
<keyword id="KW-0456">Lyase</keyword>
<keyword id="KW-0501">Molybdenum cofactor biosynthesis</keyword>